<name>CCA_BURP6</name>
<organism>
    <name type="scientific">Burkholderia pseudomallei (strain 668)</name>
    <dbReference type="NCBI Taxonomy" id="320373"/>
    <lineage>
        <taxon>Bacteria</taxon>
        <taxon>Pseudomonadati</taxon>
        <taxon>Pseudomonadota</taxon>
        <taxon>Betaproteobacteria</taxon>
        <taxon>Burkholderiales</taxon>
        <taxon>Burkholderiaceae</taxon>
        <taxon>Burkholderia</taxon>
        <taxon>pseudomallei group</taxon>
    </lineage>
</organism>
<keyword id="KW-0067">ATP-binding</keyword>
<keyword id="KW-0378">Hydrolase</keyword>
<keyword id="KW-0460">Magnesium</keyword>
<keyword id="KW-0479">Metal-binding</keyword>
<keyword id="KW-0511">Multifunctional enzyme</keyword>
<keyword id="KW-0533">Nickel</keyword>
<keyword id="KW-0547">Nucleotide-binding</keyword>
<keyword id="KW-0548">Nucleotidyltransferase</keyword>
<keyword id="KW-0692">RNA repair</keyword>
<keyword id="KW-0694">RNA-binding</keyword>
<keyword id="KW-0808">Transferase</keyword>
<keyword id="KW-0819">tRNA processing</keyword>
<reference key="1">
    <citation type="journal article" date="2010" name="Genome Biol. Evol.">
        <title>Continuing evolution of Burkholderia mallei through genome reduction and large-scale rearrangements.</title>
        <authorList>
            <person name="Losada L."/>
            <person name="Ronning C.M."/>
            <person name="DeShazer D."/>
            <person name="Woods D."/>
            <person name="Fedorova N."/>
            <person name="Kim H.S."/>
            <person name="Shabalina S.A."/>
            <person name="Pearson T.R."/>
            <person name="Brinkac L."/>
            <person name="Tan P."/>
            <person name="Nandi T."/>
            <person name="Crabtree J."/>
            <person name="Badger J."/>
            <person name="Beckstrom-Sternberg S."/>
            <person name="Saqib M."/>
            <person name="Schutzer S.E."/>
            <person name="Keim P."/>
            <person name="Nierman W.C."/>
        </authorList>
    </citation>
    <scope>NUCLEOTIDE SEQUENCE [LARGE SCALE GENOMIC DNA]</scope>
    <source>
        <strain>668</strain>
    </source>
</reference>
<comment type="function">
    <text evidence="1">Catalyzes the addition and repair of the essential 3'-terminal CCA sequence in tRNAs without using a nucleic acid template. Adds these three nucleotides in the order of C, C, and A to the tRNA nucleotide-73, using CTP and ATP as substrates and producing inorganic pyrophosphate. tRNA 3'-terminal CCA addition is required both for tRNA processing and repair. Also involved in tRNA surveillance by mediating tandem CCA addition to generate a CCACCA at the 3' terminus of unstable tRNAs. While stable tRNAs receive only 3'-terminal CCA, unstable tRNAs are marked with CCACCA and rapidly degraded.</text>
</comment>
<comment type="catalytic activity">
    <reaction evidence="1">
        <text>a tRNA precursor + 2 CTP + ATP = a tRNA with a 3' CCA end + 3 diphosphate</text>
        <dbReference type="Rhea" id="RHEA:14433"/>
        <dbReference type="Rhea" id="RHEA-COMP:10465"/>
        <dbReference type="Rhea" id="RHEA-COMP:10468"/>
        <dbReference type="ChEBI" id="CHEBI:30616"/>
        <dbReference type="ChEBI" id="CHEBI:33019"/>
        <dbReference type="ChEBI" id="CHEBI:37563"/>
        <dbReference type="ChEBI" id="CHEBI:74896"/>
        <dbReference type="ChEBI" id="CHEBI:83071"/>
        <dbReference type="EC" id="2.7.7.72"/>
    </reaction>
</comment>
<comment type="catalytic activity">
    <reaction evidence="1">
        <text>a tRNA with a 3' CCA end + 2 CTP + ATP = a tRNA with a 3' CCACCA end + 3 diphosphate</text>
        <dbReference type="Rhea" id="RHEA:76235"/>
        <dbReference type="Rhea" id="RHEA-COMP:10468"/>
        <dbReference type="Rhea" id="RHEA-COMP:18655"/>
        <dbReference type="ChEBI" id="CHEBI:30616"/>
        <dbReference type="ChEBI" id="CHEBI:33019"/>
        <dbReference type="ChEBI" id="CHEBI:37563"/>
        <dbReference type="ChEBI" id="CHEBI:83071"/>
        <dbReference type="ChEBI" id="CHEBI:195187"/>
    </reaction>
    <physiologicalReaction direction="left-to-right" evidence="1">
        <dbReference type="Rhea" id="RHEA:76236"/>
    </physiologicalReaction>
</comment>
<comment type="cofactor">
    <cofactor evidence="1">
        <name>Mg(2+)</name>
        <dbReference type="ChEBI" id="CHEBI:18420"/>
    </cofactor>
    <text evidence="1">Magnesium is required for nucleotidyltransferase activity.</text>
</comment>
<comment type="cofactor">
    <cofactor evidence="1">
        <name>Ni(2+)</name>
        <dbReference type="ChEBI" id="CHEBI:49786"/>
    </cofactor>
    <text evidence="1">Nickel for phosphatase activity.</text>
</comment>
<comment type="subunit">
    <text evidence="1">Monomer. Can also form homodimers and oligomers.</text>
</comment>
<comment type="domain">
    <text evidence="1">Comprises two domains: an N-terminal domain containing the nucleotidyltransferase activity and a C-terminal HD domain associated with both phosphodiesterase and phosphatase activities.</text>
</comment>
<comment type="miscellaneous">
    <text evidence="1">A single active site specifically recognizes both ATP and CTP and is responsible for their addition.</text>
</comment>
<comment type="similarity">
    <text evidence="1">Belongs to the tRNA nucleotidyltransferase/poly(A) polymerase family. Bacterial CCA-adding enzyme type 1 subfamily.</text>
</comment>
<protein>
    <recommendedName>
        <fullName evidence="1">Multifunctional CCA protein</fullName>
    </recommendedName>
    <domain>
        <recommendedName>
            <fullName evidence="1">CCA-adding enzyme</fullName>
            <ecNumber evidence="1">2.7.7.72</ecNumber>
        </recommendedName>
        <alternativeName>
            <fullName evidence="1">CCA tRNA nucleotidyltransferase</fullName>
        </alternativeName>
        <alternativeName>
            <fullName evidence="1">tRNA CCA-pyrophosphorylase</fullName>
        </alternativeName>
        <alternativeName>
            <fullName evidence="1">tRNA adenylyl-/cytidylyl-transferase</fullName>
        </alternativeName>
        <alternativeName>
            <fullName evidence="1">tRNA nucleotidyltransferase</fullName>
        </alternativeName>
        <alternativeName>
            <fullName evidence="1">tRNA-NT</fullName>
        </alternativeName>
    </domain>
    <domain>
        <recommendedName>
            <fullName evidence="1">2'-nucleotidase</fullName>
            <ecNumber evidence="1">3.1.3.-</ecNumber>
        </recommendedName>
    </domain>
    <domain>
        <recommendedName>
            <fullName evidence="1">2',3'-cyclic phosphodiesterase</fullName>
            <ecNumber evidence="1">3.1.4.-</ecNumber>
        </recommendedName>
    </domain>
    <domain>
        <recommendedName>
            <fullName evidence="1">Phosphatase</fullName>
            <ecNumber evidence="1">3.1.3.-</ecNumber>
        </recommendedName>
    </domain>
</protein>
<dbReference type="EC" id="2.7.7.72" evidence="1"/>
<dbReference type="EC" id="3.1.3.-" evidence="1"/>
<dbReference type="EC" id="3.1.4.-" evidence="1"/>
<dbReference type="EMBL" id="CP000570">
    <property type="protein sequence ID" value="ABN83527.1"/>
    <property type="molecule type" value="Genomic_DNA"/>
</dbReference>
<dbReference type="RefSeq" id="WP_004542854.1">
    <property type="nucleotide sequence ID" value="NC_009074.1"/>
</dbReference>
<dbReference type="SMR" id="A3N4P2"/>
<dbReference type="KEGG" id="bpd:BURPS668_0260"/>
<dbReference type="HOGENOM" id="CLU_015961_1_1_4"/>
<dbReference type="GO" id="GO:0005524">
    <property type="term" value="F:ATP binding"/>
    <property type="evidence" value="ECO:0007669"/>
    <property type="project" value="UniProtKB-UniRule"/>
</dbReference>
<dbReference type="GO" id="GO:0004810">
    <property type="term" value="F:CCA tRNA nucleotidyltransferase activity"/>
    <property type="evidence" value="ECO:0007669"/>
    <property type="project" value="UniProtKB-UniRule"/>
</dbReference>
<dbReference type="GO" id="GO:0004112">
    <property type="term" value="F:cyclic-nucleotide phosphodiesterase activity"/>
    <property type="evidence" value="ECO:0007669"/>
    <property type="project" value="UniProtKB-UniRule"/>
</dbReference>
<dbReference type="GO" id="GO:0000287">
    <property type="term" value="F:magnesium ion binding"/>
    <property type="evidence" value="ECO:0007669"/>
    <property type="project" value="UniProtKB-UniRule"/>
</dbReference>
<dbReference type="GO" id="GO:0016791">
    <property type="term" value="F:phosphatase activity"/>
    <property type="evidence" value="ECO:0007669"/>
    <property type="project" value="UniProtKB-UniRule"/>
</dbReference>
<dbReference type="GO" id="GO:0000049">
    <property type="term" value="F:tRNA binding"/>
    <property type="evidence" value="ECO:0007669"/>
    <property type="project" value="UniProtKB-UniRule"/>
</dbReference>
<dbReference type="GO" id="GO:0042245">
    <property type="term" value="P:RNA repair"/>
    <property type="evidence" value="ECO:0007669"/>
    <property type="project" value="UniProtKB-KW"/>
</dbReference>
<dbReference type="GO" id="GO:0001680">
    <property type="term" value="P:tRNA 3'-terminal CCA addition"/>
    <property type="evidence" value="ECO:0007669"/>
    <property type="project" value="UniProtKB-UniRule"/>
</dbReference>
<dbReference type="CDD" id="cd05398">
    <property type="entry name" value="NT_ClassII-CCAase"/>
    <property type="match status" value="1"/>
</dbReference>
<dbReference type="Gene3D" id="3.30.460.10">
    <property type="entry name" value="Beta Polymerase, domain 2"/>
    <property type="match status" value="1"/>
</dbReference>
<dbReference type="Gene3D" id="1.10.3090.10">
    <property type="entry name" value="cca-adding enzyme, domain 2"/>
    <property type="match status" value="1"/>
</dbReference>
<dbReference type="HAMAP" id="MF_01261">
    <property type="entry name" value="CCA_bact_type1"/>
    <property type="match status" value="1"/>
</dbReference>
<dbReference type="HAMAP" id="MF_01262">
    <property type="entry name" value="CCA_bact_type2"/>
    <property type="match status" value="1"/>
</dbReference>
<dbReference type="InterPro" id="IPR012006">
    <property type="entry name" value="CCA_bact"/>
</dbReference>
<dbReference type="InterPro" id="IPR006674">
    <property type="entry name" value="HD_domain"/>
</dbReference>
<dbReference type="InterPro" id="IPR043519">
    <property type="entry name" value="NT_sf"/>
</dbReference>
<dbReference type="InterPro" id="IPR002646">
    <property type="entry name" value="PolA_pol_head_dom"/>
</dbReference>
<dbReference type="InterPro" id="IPR032828">
    <property type="entry name" value="PolyA_RNA-bd"/>
</dbReference>
<dbReference type="InterPro" id="IPR050124">
    <property type="entry name" value="tRNA_CCA-adding_enzyme"/>
</dbReference>
<dbReference type="NCBIfam" id="NF008137">
    <property type="entry name" value="PRK10885.1"/>
    <property type="match status" value="1"/>
</dbReference>
<dbReference type="PANTHER" id="PTHR47545">
    <property type="entry name" value="MULTIFUNCTIONAL CCA PROTEIN"/>
    <property type="match status" value="1"/>
</dbReference>
<dbReference type="PANTHER" id="PTHR47545:SF1">
    <property type="entry name" value="MULTIFUNCTIONAL CCA PROTEIN"/>
    <property type="match status" value="1"/>
</dbReference>
<dbReference type="Pfam" id="PF01966">
    <property type="entry name" value="HD"/>
    <property type="match status" value="1"/>
</dbReference>
<dbReference type="Pfam" id="PF01743">
    <property type="entry name" value="PolyA_pol"/>
    <property type="match status" value="1"/>
</dbReference>
<dbReference type="Pfam" id="PF12627">
    <property type="entry name" value="PolyA_pol_RNAbd"/>
    <property type="match status" value="1"/>
</dbReference>
<dbReference type="PIRSF" id="PIRSF000813">
    <property type="entry name" value="CCA_bact"/>
    <property type="match status" value="1"/>
</dbReference>
<dbReference type="SUPFAM" id="SSF81301">
    <property type="entry name" value="Nucleotidyltransferase"/>
    <property type="match status" value="1"/>
</dbReference>
<dbReference type="SUPFAM" id="SSF81891">
    <property type="entry name" value="Poly A polymerase C-terminal region-like"/>
    <property type="match status" value="1"/>
</dbReference>
<dbReference type="PROSITE" id="PS51831">
    <property type="entry name" value="HD"/>
    <property type="match status" value="1"/>
</dbReference>
<accession>A3N4P2</accession>
<proteinExistence type="inferred from homology"/>
<gene>
    <name evidence="1" type="primary">cca</name>
    <name type="ordered locus">BURPS668_0260</name>
</gene>
<feature type="chain" id="PRO_1000054257" description="Multifunctional CCA protein">
    <location>
        <begin position="1"/>
        <end position="413"/>
    </location>
</feature>
<feature type="domain" description="HD" evidence="1">
    <location>
        <begin position="232"/>
        <end position="333"/>
    </location>
</feature>
<feature type="binding site" evidence="1">
    <location>
        <position position="8"/>
    </location>
    <ligand>
        <name>ATP</name>
        <dbReference type="ChEBI" id="CHEBI:30616"/>
    </ligand>
</feature>
<feature type="binding site" evidence="1">
    <location>
        <position position="8"/>
    </location>
    <ligand>
        <name>CTP</name>
        <dbReference type="ChEBI" id="CHEBI:37563"/>
    </ligand>
</feature>
<feature type="binding site" evidence="1">
    <location>
        <position position="11"/>
    </location>
    <ligand>
        <name>ATP</name>
        <dbReference type="ChEBI" id="CHEBI:30616"/>
    </ligand>
</feature>
<feature type="binding site" evidence="1">
    <location>
        <position position="11"/>
    </location>
    <ligand>
        <name>CTP</name>
        <dbReference type="ChEBI" id="CHEBI:37563"/>
    </ligand>
</feature>
<feature type="binding site" evidence="1">
    <location>
        <position position="21"/>
    </location>
    <ligand>
        <name>Mg(2+)</name>
        <dbReference type="ChEBI" id="CHEBI:18420"/>
    </ligand>
</feature>
<feature type="binding site" evidence="1">
    <location>
        <position position="23"/>
    </location>
    <ligand>
        <name>Mg(2+)</name>
        <dbReference type="ChEBI" id="CHEBI:18420"/>
    </ligand>
</feature>
<feature type="binding site" evidence="1">
    <location>
        <position position="91"/>
    </location>
    <ligand>
        <name>ATP</name>
        <dbReference type="ChEBI" id="CHEBI:30616"/>
    </ligand>
</feature>
<feature type="binding site" evidence="1">
    <location>
        <position position="91"/>
    </location>
    <ligand>
        <name>CTP</name>
        <dbReference type="ChEBI" id="CHEBI:37563"/>
    </ligand>
</feature>
<feature type="binding site" evidence="1">
    <location>
        <position position="143"/>
    </location>
    <ligand>
        <name>ATP</name>
        <dbReference type="ChEBI" id="CHEBI:30616"/>
    </ligand>
</feature>
<feature type="binding site" evidence="1">
    <location>
        <position position="143"/>
    </location>
    <ligand>
        <name>CTP</name>
        <dbReference type="ChEBI" id="CHEBI:37563"/>
    </ligand>
</feature>
<feature type="binding site" evidence="1">
    <location>
        <position position="146"/>
    </location>
    <ligand>
        <name>ATP</name>
        <dbReference type="ChEBI" id="CHEBI:30616"/>
    </ligand>
</feature>
<feature type="binding site" evidence="1">
    <location>
        <position position="146"/>
    </location>
    <ligand>
        <name>CTP</name>
        <dbReference type="ChEBI" id="CHEBI:37563"/>
    </ligand>
</feature>
<sequence length="413" mass="45141">MKIYAVGGAIRDALLGLPVRDRDYVVVGATPEQMAAQRFRPVGKDFPVFLHPDTHEEYALARTERKTAAGYHGFQFYYAPDVTLEQDLVRRDLTINAMAREVSPDGALVGPVVDPFGGQADLRAKLFRHVGDAFVEDPVRILRVARFAARFAEFAVAPDTAALMRAMVDAGEVDALVPERVWQELARGLMEAKPSRMFAVLRECGALARILPEIDALFGVPQRADYHPEVDTGVHVMMVIDHAAKQGYSLPVRFAALTHDLGKATTPADVLPRHIGHEGRSVDLLKPLCERLRVPNECRDLALVVAREHGNLHRVMEMGAAALVRLLERADALRKPARFAEALQASEADARGRLGLETKPYPQAERLRQALVAARAVDAGAIAQGLAGEPAKIRDAVHRARVRAVAQAVGVAD</sequence>
<evidence type="ECO:0000255" key="1">
    <source>
        <dbReference type="HAMAP-Rule" id="MF_01261"/>
    </source>
</evidence>